<accession>Q4R942</accession>
<comment type="function">
    <text evidence="1">Responsible for the biosynthesis of pyroglutamyl peptides.</text>
</comment>
<comment type="catalytic activity">
    <reaction>
        <text>N-terminal L-glutaminyl-[peptide] = N-terminal 5-oxo-L-prolyl-[peptide] + NH4(+)</text>
        <dbReference type="Rhea" id="RHEA:23652"/>
        <dbReference type="Rhea" id="RHEA-COMP:11736"/>
        <dbReference type="Rhea" id="RHEA-COMP:11846"/>
        <dbReference type="ChEBI" id="CHEBI:28938"/>
        <dbReference type="ChEBI" id="CHEBI:64722"/>
        <dbReference type="ChEBI" id="CHEBI:87215"/>
        <dbReference type="EC" id="2.3.2.5"/>
    </reaction>
</comment>
<comment type="subcellular location">
    <subcellularLocation>
        <location evidence="1">Golgi apparatus membrane</location>
        <topology evidence="1">Single-pass type I membrane protein</topology>
    </subcellularLocation>
</comment>
<comment type="similarity">
    <text evidence="5">Belongs to the glutaminyl-peptide cyclotransferase family.</text>
</comment>
<comment type="caution">
    <text evidence="2 3">It is unclear whether this protein requires a metal cofactor for catalysis. It was originally proposed to be a Zn(2+)-dependent metalloenzyme based on structural similarities to bacterial aminopeptidases and the observation that it can bind Zn(2+) ions, typically in a 1:1 stoichiometry (By similarity). However, a recent study suggests a Zn(2+)-independent catalytic mechanism (By similarity).</text>
</comment>
<dbReference type="EC" id="2.3.2.5"/>
<dbReference type="EMBL" id="AB168255">
    <property type="protein sequence ID" value="BAE00379.1"/>
    <property type="molecule type" value="mRNA"/>
</dbReference>
<dbReference type="RefSeq" id="NP_001270871.1">
    <property type="nucleotide sequence ID" value="NM_001283942.1"/>
</dbReference>
<dbReference type="RefSeq" id="XP_015296440.1">
    <property type="nucleotide sequence ID" value="XM_015440954.3"/>
</dbReference>
<dbReference type="SMR" id="Q4R942"/>
<dbReference type="STRING" id="9541.ENSMFAP00000010695"/>
<dbReference type="MEROPS" id="M28.016"/>
<dbReference type="Ensembl" id="ENSMFAT00000042623.2">
    <property type="protein sequence ID" value="ENSMFAP00000010695.1"/>
    <property type="gene ID" value="ENSMFAG00000009032.2"/>
</dbReference>
<dbReference type="GeneID" id="102124146"/>
<dbReference type="KEGG" id="mcf:102124146"/>
<dbReference type="CTD" id="54814"/>
<dbReference type="VEuPathDB" id="HostDB:ENSMFAG00000009032"/>
<dbReference type="eggNOG" id="KOG3946">
    <property type="taxonomic scope" value="Eukaryota"/>
</dbReference>
<dbReference type="GeneTree" id="ENSGT00390000003107"/>
<dbReference type="OMA" id="CAHWDSR"/>
<dbReference type="OrthoDB" id="8970at314294"/>
<dbReference type="Proteomes" id="UP000233100">
    <property type="component" value="Chromosome 19"/>
</dbReference>
<dbReference type="Bgee" id="ENSMFAG00000009032">
    <property type="expression patterns" value="Expressed in skeletal muscle tissue and 13 other cell types or tissues"/>
</dbReference>
<dbReference type="GO" id="GO:0000139">
    <property type="term" value="C:Golgi membrane"/>
    <property type="evidence" value="ECO:0007669"/>
    <property type="project" value="UniProtKB-SubCell"/>
</dbReference>
<dbReference type="GO" id="GO:0016603">
    <property type="term" value="F:glutaminyl-peptide cyclotransferase activity"/>
    <property type="evidence" value="ECO:0000250"/>
    <property type="project" value="UniProtKB"/>
</dbReference>
<dbReference type="GO" id="GO:0008270">
    <property type="term" value="F:zinc ion binding"/>
    <property type="evidence" value="ECO:0000250"/>
    <property type="project" value="UniProtKB"/>
</dbReference>
<dbReference type="GO" id="GO:0017186">
    <property type="term" value="P:peptidyl-pyroglutamic acid biosynthetic process, using glutaminyl-peptide cyclotransferase"/>
    <property type="evidence" value="ECO:0000250"/>
    <property type="project" value="UniProtKB"/>
</dbReference>
<dbReference type="CDD" id="cd03880">
    <property type="entry name" value="M28_QC_like"/>
    <property type="match status" value="1"/>
</dbReference>
<dbReference type="FunFam" id="3.40.630.10:FF:000053">
    <property type="entry name" value="glutaminyl-peptide cyclotransferase-like protein"/>
    <property type="match status" value="1"/>
</dbReference>
<dbReference type="Gene3D" id="3.40.630.10">
    <property type="entry name" value="Zn peptidases"/>
    <property type="match status" value="1"/>
</dbReference>
<dbReference type="InterPro" id="IPR037457">
    <property type="entry name" value="M28_QC"/>
</dbReference>
<dbReference type="InterPro" id="IPR007484">
    <property type="entry name" value="Peptidase_M28"/>
</dbReference>
<dbReference type="InterPro" id="IPR040234">
    <property type="entry name" value="QC/QCL"/>
</dbReference>
<dbReference type="PANTHER" id="PTHR12283">
    <property type="entry name" value="GLUTAMINYL-PEPTIDE CYCLOTRANSFERASE"/>
    <property type="match status" value="1"/>
</dbReference>
<dbReference type="PANTHER" id="PTHR12283:SF3">
    <property type="entry name" value="GLUTAMINYL-PEPTIDE CYCLOTRANSFERASE-LIKE PROTEIN"/>
    <property type="match status" value="1"/>
</dbReference>
<dbReference type="Pfam" id="PF04389">
    <property type="entry name" value="Peptidase_M28"/>
    <property type="match status" value="1"/>
</dbReference>
<dbReference type="SUPFAM" id="SSF53187">
    <property type="entry name" value="Zn-dependent exopeptidases"/>
    <property type="match status" value="1"/>
</dbReference>
<proteinExistence type="evidence at transcript level"/>
<name>QPCTL_MACFA</name>
<feature type="chain" id="PRO_0000302003" description="Glutaminyl-peptide cyclotransferase-like protein">
    <location>
        <begin position="1"/>
        <end position="382"/>
    </location>
</feature>
<feature type="transmembrane region" description="Helical" evidence="4">
    <location>
        <begin position="35"/>
        <end position="55"/>
    </location>
</feature>
<feature type="active site" description="Proton acceptor" evidence="3">
    <location>
        <position position="225"/>
    </location>
</feature>
<feature type="active site" description="Proton acceptor" evidence="3">
    <location>
        <position position="269"/>
    </location>
</feature>
<feature type="binding site" evidence="3">
    <location>
        <position position="186"/>
    </location>
    <ligand>
        <name>Zn(2+)</name>
        <dbReference type="ChEBI" id="CHEBI:29105"/>
    </ligand>
</feature>
<feature type="binding site" evidence="3">
    <location>
        <position position="226"/>
    </location>
    <ligand>
        <name>Zn(2+)</name>
        <dbReference type="ChEBI" id="CHEBI:29105"/>
    </ligand>
</feature>
<feature type="binding site" evidence="3">
    <location>
        <position position="351"/>
    </location>
    <ligand>
        <name>Zn(2+)</name>
        <dbReference type="ChEBI" id="CHEBI:29105"/>
    </ligand>
</feature>
<feature type="disulfide bond" evidence="3">
    <location>
        <begin position="167"/>
        <end position="191"/>
    </location>
</feature>
<keyword id="KW-0012">Acyltransferase</keyword>
<keyword id="KW-1015">Disulfide bond</keyword>
<keyword id="KW-0333">Golgi apparatus</keyword>
<keyword id="KW-0472">Membrane</keyword>
<keyword id="KW-0479">Metal-binding</keyword>
<keyword id="KW-1185">Reference proteome</keyword>
<keyword id="KW-0808">Transferase</keyword>
<keyword id="KW-0812">Transmembrane</keyword>
<keyword id="KW-1133">Transmembrane helix</keyword>
<keyword id="KW-0862">Zinc</keyword>
<sequence>MRSGGRGRPRLRLGERGVMEPLLPPKRRLLPRVRLLPLLLALAVGSAFYTIWSGWHRRTEELPLGRELRVPLIGSLPEARLRRVVGQLDPQRLWGTYLRPLLVVRTPGSPGNLQVRKFLEATLRSLTAGWHVELDPFTASTPLGPVDFGNVVATLDPGAARHLTLACHYDSKLFPPGSTPFVGATDSAVPCALLLELAQALDLELSRAKEQAAPVTLQLLFLDGEEALKEWGPKDSLYGSRHLAQLMESIPHSPGPTRIQAIELFMLLDLLGAPNPTFYSHFPRTVRWFHRLRSIEKRLHRLNLLQSHPQEVMYFQPGEPFGSVEDDHIPFLRRGVPVLHLISTPFPAVWHTPADTEANLHPPTVHNLSRILAVFLAEYLGL</sequence>
<reference key="1">
    <citation type="submission" date="2005-06" db="EMBL/GenBank/DDBJ databases">
        <title>DNA sequences of macaque genes expressed in brain or testis and its evolutionary implications.</title>
        <authorList>
            <consortium name="International consortium for macaque cDNA sequencing and analysis"/>
        </authorList>
    </citation>
    <scope>NUCLEOTIDE SEQUENCE [LARGE SCALE MRNA]</scope>
    <source>
        <tissue>Testis</tissue>
    </source>
</reference>
<gene>
    <name type="primary">QPCTL</name>
    <name type="ORF">QtsA-10761</name>
</gene>
<evidence type="ECO:0000250" key="1"/>
<evidence type="ECO:0000250" key="2">
    <source>
        <dbReference type="UniProtKB" id="B7QK46"/>
    </source>
</evidence>
<evidence type="ECO:0000250" key="3">
    <source>
        <dbReference type="UniProtKB" id="Q16769"/>
    </source>
</evidence>
<evidence type="ECO:0000255" key="4"/>
<evidence type="ECO:0000305" key="5"/>
<protein>
    <recommendedName>
        <fullName>Glutaminyl-peptide cyclotransferase-like protein</fullName>
        <ecNumber>2.3.2.5</ecNumber>
    </recommendedName>
    <alternativeName>
        <fullName>Golgi-resident glutaminyl-peptide cyclotransferase</fullName>
    </alternativeName>
    <alternativeName>
        <fullName>isoQC</fullName>
        <shortName>gQC</shortName>
    </alternativeName>
</protein>
<organism>
    <name type="scientific">Macaca fascicularis</name>
    <name type="common">Crab-eating macaque</name>
    <name type="synonym">Cynomolgus monkey</name>
    <dbReference type="NCBI Taxonomy" id="9541"/>
    <lineage>
        <taxon>Eukaryota</taxon>
        <taxon>Metazoa</taxon>
        <taxon>Chordata</taxon>
        <taxon>Craniata</taxon>
        <taxon>Vertebrata</taxon>
        <taxon>Euteleostomi</taxon>
        <taxon>Mammalia</taxon>
        <taxon>Eutheria</taxon>
        <taxon>Euarchontoglires</taxon>
        <taxon>Primates</taxon>
        <taxon>Haplorrhini</taxon>
        <taxon>Catarrhini</taxon>
        <taxon>Cercopithecidae</taxon>
        <taxon>Cercopithecinae</taxon>
        <taxon>Macaca</taxon>
    </lineage>
</organism>